<gene>
    <name evidence="1" type="primary">iscA</name>
    <name type="ordered locus">E2348C_2811</name>
</gene>
<proteinExistence type="inferred from homology"/>
<dbReference type="EMBL" id="FM180568">
    <property type="protein sequence ID" value="CAS10359.1"/>
    <property type="molecule type" value="Genomic_DNA"/>
</dbReference>
<dbReference type="RefSeq" id="WP_000028953.1">
    <property type="nucleotide sequence ID" value="NC_011601.1"/>
</dbReference>
<dbReference type="SMR" id="B7UGX4"/>
<dbReference type="GeneID" id="93774608"/>
<dbReference type="KEGG" id="ecg:E2348C_2811"/>
<dbReference type="HOGENOM" id="CLU_069054_5_1_6"/>
<dbReference type="Proteomes" id="UP000008205">
    <property type="component" value="Chromosome"/>
</dbReference>
<dbReference type="GO" id="GO:0005829">
    <property type="term" value="C:cytosol"/>
    <property type="evidence" value="ECO:0007669"/>
    <property type="project" value="TreeGrafter"/>
</dbReference>
<dbReference type="GO" id="GO:0051537">
    <property type="term" value="F:2 iron, 2 sulfur cluster binding"/>
    <property type="evidence" value="ECO:0007669"/>
    <property type="project" value="UniProtKB-ARBA"/>
</dbReference>
<dbReference type="GO" id="GO:0005506">
    <property type="term" value="F:iron ion binding"/>
    <property type="evidence" value="ECO:0007669"/>
    <property type="project" value="UniProtKB-UniRule"/>
</dbReference>
<dbReference type="GO" id="GO:0016226">
    <property type="term" value="P:iron-sulfur cluster assembly"/>
    <property type="evidence" value="ECO:0007669"/>
    <property type="project" value="UniProtKB-UniRule"/>
</dbReference>
<dbReference type="FunFam" id="2.60.300.12:FF:000001">
    <property type="entry name" value="Iron-binding protein IscA"/>
    <property type="match status" value="1"/>
</dbReference>
<dbReference type="Gene3D" id="2.60.300.12">
    <property type="entry name" value="HesB-like domain"/>
    <property type="match status" value="1"/>
</dbReference>
<dbReference type="HAMAP" id="MF_01429">
    <property type="entry name" value="Fe_S_insert_IscA"/>
    <property type="match status" value="1"/>
</dbReference>
<dbReference type="InterPro" id="IPR050322">
    <property type="entry name" value="Fe-S_cluster_asmbl/transfer"/>
</dbReference>
<dbReference type="InterPro" id="IPR000361">
    <property type="entry name" value="FeS_biogenesis"/>
</dbReference>
<dbReference type="InterPro" id="IPR016092">
    <property type="entry name" value="FeS_cluster_insertion"/>
</dbReference>
<dbReference type="InterPro" id="IPR017870">
    <property type="entry name" value="FeS_cluster_insertion_CS"/>
</dbReference>
<dbReference type="InterPro" id="IPR035903">
    <property type="entry name" value="HesB-like_dom_sf"/>
</dbReference>
<dbReference type="InterPro" id="IPR011302">
    <property type="entry name" value="IscA_proteobacteria"/>
</dbReference>
<dbReference type="NCBIfam" id="TIGR00049">
    <property type="entry name" value="iron-sulfur cluster assembly accessory protein"/>
    <property type="match status" value="1"/>
</dbReference>
<dbReference type="NCBIfam" id="TIGR02011">
    <property type="entry name" value="IscA"/>
    <property type="match status" value="1"/>
</dbReference>
<dbReference type="NCBIfam" id="NF007049">
    <property type="entry name" value="PRK09502.1"/>
    <property type="match status" value="1"/>
</dbReference>
<dbReference type="PANTHER" id="PTHR10072:SF41">
    <property type="entry name" value="IRON-SULFUR CLUSTER ASSEMBLY 1 HOMOLOG, MITOCHONDRIAL"/>
    <property type="match status" value="1"/>
</dbReference>
<dbReference type="PANTHER" id="PTHR10072">
    <property type="entry name" value="IRON-SULFUR CLUSTER ASSEMBLY PROTEIN"/>
    <property type="match status" value="1"/>
</dbReference>
<dbReference type="Pfam" id="PF01521">
    <property type="entry name" value="Fe-S_biosyn"/>
    <property type="match status" value="1"/>
</dbReference>
<dbReference type="SUPFAM" id="SSF89360">
    <property type="entry name" value="HesB-like domain"/>
    <property type="match status" value="1"/>
</dbReference>
<dbReference type="PROSITE" id="PS01152">
    <property type="entry name" value="HESB"/>
    <property type="match status" value="1"/>
</dbReference>
<sequence>MSITLSDSAAARVNTFLANRGKGFGLRLGVRTSGCSGMAYVLEFVDEPTPEDIVFEDKGVKVVVDGKSLQFLDGTQLDFVKEGLNEGFKFTNPNVKDECGCGESFHV</sequence>
<organism>
    <name type="scientific">Escherichia coli O127:H6 (strain E2348/69 / EPEC)</name>
    <dbReference type="NCBI Taxonomy" id="574521"/>
    <lineage>
        <taxon>Bacteria</taxon>
        <taxon>Pseudomonadati</taxon>
        <taxon>Pseudomonadota</taxon>
        <taxon>Gammaproteobacteria</taxon>
        <taxon>Enterobacterales</taxon>
        <taxon>Enterobacteriaceae</taxon>
        <taxon>Escherichia</taxon>
    </lineage>
</organism>
<feature type="chain" id="PRO_1000184884" description="Iron-binding protein IscA">
    <location>
        <begin position="1"/>
        <end position="107"/>
    </location>
</feature>
<feature type="binding site" evidence="1">
    <location>
        <position position="35"/>
    </location>
    <ligand>
        <name>Fe cation</name>
        <dbReference type="ChEBI" id="CHEBI:24875"/>
    </ligand>
</feature>
<feature type="binding site" evidence="1">
    <location>
        <position position="99"/>
    </location>
    <ligand>
        <name>Fe cation</name>
        <dbReference type="ChEBI" id="CHEBI:24875"/>
    </ligand>
</feature>
<feature type="binding site" evidence="1">
    <location>
        <position position="101"/>
    </location>
    <ligand>
        <name>Fe cation</name>
        <dbReference type="ChEBI" id="CHEBI:24875"/>
    </ligand>
</feature>
<evidence type="ECO:0000255" key="1">
    <source>
        <dbReference type="HAMAP-Rule" id="MF_01429"/>
    </source>
</evidence>
<protein>
    <recommendedName>
        <fullName evidence="1">Iron-binding protein IscA</fullName>
    </recommendedName>
    <alternativeName>
        <fullName evidence="1">Iron-sulfur cluster assembly protein</fullName>
    </alternativeName>
</protein>
<comment type="function">
    <text evidence="1">Is able to transfer iron-sulfur clusters to apo-ferredoxin. Multiple cycles of [2Fe2S] cluster formation and transfer are observed, suggesting that IscA acts catalytically. Recruits intracellular free iron so as to provide iron for the assembly of transient iron-sulfur cluster in IscU in the presence of IscS, L-cysteine and the thioredoxin reductase system TrxA/TrxB.</text>
</comment>
<comment type="cofactor">
    <cofactor evidence="1">
        <name>Fe cation</name>
        <dbReference type="ChEBI" id="CHEBI:24875"/>
    </cofactor>
    <text evidence="1">Binds 2 iron ions per dimer. The dimer may bind additional iron ions.</text>
</comment>
<comment type="subunit">
    <text evidence="1">Homodimer; may form tetramers and higher multimers.</text>
</comment>
<comment type="similarity">
    <text evidence="1">Belongs to the HesB/IscA family.</text>
</comment>
<reference key="1">
    <citation type="journal article" date="2009" name="J. Bacteriol.">
        <title>Complete genome sequence and comparative genome analysis of enteropathogenic Escherichia coli O127:H6 strain E2348/69.</title>
        <authorList>
            <person name="Iguchi A."/>
            <person name="Thomson N.R."/>
            <person name="Ogura Y."/>
            <person name="Saunders D."/>
            <person name="Ooka T."/>
            <person name="Henderson I.R."/>
            <person name="Harris D."/>
            <person name="Asadulghani M."/>
            <person name="Kurokawa K."/>
            <person name="Dean P."/>
            <person name="Kenny B."/>
            <person name="Quail M.A."/>
            <person name="Thurston S."/>
            <person name="Dougan G."/>
            <person name="Hayashi T."/>
            <person name="Parkhill J."/>
            <person name="Frankel G."/>
        </authorList>
    </citation>
    <scope>NUCLEOTIDE SEQUENCE [LARGE SCALE GENOMIC DNA]</scope>
    <source>
        <strain>E2348/69 / EPEC</strain>
    </source>
</reference>
<name>ISCA_ECO27</name>
<accession>B7UGX4</accession>
<keyword id="KW-0408">Iron</keyword>
<keyword id="KW-0479">Metal-binding</keyword>
<keyword id="KW-1185">Reference proteome</keyword>